<gene>
    <name evidence="1" type="primary">rpsR</name>
    <name type="ordered locus">BUsg_543</name>
</gene>
<feature type="chain" id="PRO_0000111131" description="Small ribosomal subunit protein bS18">
    <location>
        <begin position="1"/>
        <end position="75"/>
    </location>
</feature>
<comment type="function">
    <text evidence="1">Binds as a heterodimer with protein bS6 to the central domain of the 16S rRNA, where it helps stabilize the platform of the 30S subunit.</text>
</comment>
<comment type="subunit">
    <text evidence="1">Part of the 30S ribosomal subunit. Forms a tight heterodimer with protein bS6.</text>
</comment>
<comment type="similarity">
    <text evidence="1">Belongs to the bacterial ribosomal protein bS18 family.</text>
</comment>
<proteinExistence type="inferred from homology"/>
<dbReference type="EMBL" id="AE013218">
    <property type="protein sequence ID" value="AAM68082.1"/>
    <property type="molecule type" value="Genomic_DNA"/>
</dbReference>
<dbReference type="RefSeq" id="WP_011054048.1">
    <property type="nucleotide sequence ID" value="NC_004061.1"/>
</dbReference>
<dbReference type="SMR" id="Q8K919"/>
<dbReference type="STRING" id="198804.BUsg_543"/>
<dbReference type="GeneID" id="93004020"/>
<dbReference type="KEGG" id="bas:BUsg_543"/>
<dbReference type="eggNOG" id="COG0238">
    <property type="taxonomic scope" value="Bacteria"/>
</dbReference>
<dbReference type="HOGENOM" id="CLU_148710_2_3_6"/>
<dbReference type="Proteomes" id="UP000000416">
    <property type="component" value="Chromosome"/>
</dbReference>
<dbReference type="GO" id="GO:0022627">
    <property type="term" value="C:cytosolic small ribosomal subunit"/>
    <property type="evidence" value="ECO:0007669"/>
    <property type="project" value="TreeGrafter"/>
</dbReference>
<dbReference type="GO" id="GO:0070181">
    <property type="term" value="F:small ribosomal subunit rRNA binding"/>
    <property type="evidence" value="ECO:0007669"/>
    <property type="project" value="TreeGrafter"/>
</dbReference>
<dbReference type="GO" id="GO:0003735">
    <property type="term" value="F:structural constituent of ribosome"/>
    <property type="evidence" value="ECO:0007669"/>
    <property type="project" value="InterPro"/>
</dbReference>
<dbReference type="GO" id="GO:0006412">
    <property type="term" value="P:translation"/>
    <property type="evidence" value="ECO:0007669"/>
    <property type="project" value="UniProtKB-UniRule"/>
</dbReference>
<dbReference type="FunFam" id="4.10.640.10:FF:000001">
    <property type="entry name" value="30S ribosomal protein S18"/>
    <property type="match status" value="1"/>
</dbReference>
<dbReference type="Gene3D" id="4.10.640.10">
    <property type="entry name" value="Ribosomal protein S18"/>
    <property type="match status" value="1"/>
</dbReference>
<dbReference type="HAMAP" id="MF_00270">
    <property type="entry name" value="Ribosomal_bS18"/>
    <property type="match status" value="1"/>
</dbReference>
<dbReference type="InterPro" id="IPR001648">
    <property type="entry name" value="Ribosomal_bS18"/>
</dbReference>
<dbReference type="InterPro" id="IPR018275">
    <property type="entry name" value="Ribosomal_bS18_CS"/>
</dbReference>
<dbReference type="InterPro" id="IPR036870">
    <property type="entry name" value="Ribosomal_bS18_sf"/>
</dbReference>
<dbReference type="NCBIfam" id="TIGR00165">
    <property type="entry name" value="S18"/>
    <property type="match status" value="1"/>
</dbReference>
<dbReference type="PANTHER" id="PTHR13479">
    <property type="entry name" value="30S RIBOSOMAL PROTEIN S18"/>
    <property type="match status" value="1"/>
</dbReference>
<dbReference type="PANTHER" id="PTHR13479:SF40">
    <property type="entry name" value="SMALL RIBOSOMAL SUBUNIT PROTEIN BS18M"/>
    <property type="match status" value="1"/>
</dbReference>
<dbReference type="Pfam" id="PF01084">
    <property type="entry name" value="Ribosomal_S18"/>
    <property type="match status" value="1"/>
</dbReference>
<dbReference type="PRINTS" id="PR00974">
    <property type="entry name" value="RIBOSOMALS18"/>
</dbReference>
<dbReference type="SUPFAM" id="SSF46911">
    <property type="entry name" value="Ribosomal protein S18"/>
    <property type="match status" value="1"/>
</dbReference>
<dbReference type="PROSITE" id="PS00057">
    <property type="entry name" value="RIBOSOMAL_S18"/>
    <property type="match status" value="1"/>
</dbReference>
<sequence>MARYFRRRKFCRFTAEGIQEIDYKDIAMLKNYITENGKIVPSRITGTRAKFQRQLSRAIKKARYLALLPYTDQHH</sequence>
<protein>
    <recommendedName>
        <fullName evidence="1">Small ribosomal subunit protein bS18</fullName>
    </recommendedName>
    <alternativeName>
        <fullName evidence="2">30S ribosomal protein S18</fullName>
    </alternativeName>
</protein>
<name>RS18_BUCAP</name>
<keyword id="KW-0687">Ribonucleoprotein</keyword>
<keyword id="KW-0689">Ribosomal protein</keyword>
<keyword id="KW-0694">RNA-binding</keyword>
<keyword id="KW-0699">rRNA-binding</keyword>
<evidence type="ECO:0000255" key="1">
    <source>
        <dbReference type="HAMAP-Rule" id="MF_00270"/>
    </source>
</evidence>
<evidence type="ECO:0000305" key="2"/>
<accession>Q8K919</accession>
<organism>
    <name type="scientific">Buchnera aphidicola subsp. Schizaphis graminum (strain Sg)</name>
    <dbReference type="NCBI Taxonomy" id="198804"/>
    <lineage>
        <taxon>Bacteria</taxon>
        <taxon>Pseudomonadati</taxon>
        <taxon>Pseudomonadota</taxon>
        <taxon>Gammaproteobacteria</taxon>
        <taxon>Enterobacterales</taxon>
        <taxon>Erwiniaceae</taxon>
        <taxon>Buchnera</taxon>
    </lineage>
</organism>
<reference key="1">
    <citation type="journal article" date="2002" name="Science">
        <title>50 million years of genomic stasis in endosymbiotic bacteria.</title>
        <authorList>
            <person name="Tamas I."/>
            <person name="Klasson L."/>
            <person name="Canbaeck B."/>
            <person name="Naeslund A.K."/>
            <person name="Eriksson A.-S."/>
            <person name="Wernegreen J.J."/>
            <person name="Sandstroem J.P."/>
            <person name="Moran N.A."/>
            <person name="Andersson S.G.E."/>
        </authorList>
    </citation>
    <scope>NUCLEOTIDE SEQUENCE [LARGE SCALE GENOMIC DNA]</scope>
    <source>
        <strain>Sg</strain>
    </source>
</reference>